<reference key="1">
    <citation type="journal article" date="2010" name="Genome Biol.">
        <title>Structure and dynamics of the pan-genome of Streptococcus pneumoniae and closely related species.</title>
        <authorList>
            <person name="Donati C."/>
            <person name="Hiller N.L."/>
            <person name="Tettelin H."/>
            <person name="Muzzi A."/>
            <person name="Croucher N.J."/>
            <person name="Angiuoli S.V."/>
            <person name="Oggioni M."/>
            <person name="Dunning Hotopp J.C."/>
            <person name="Hu F.Z."/>
            <person name="Riley D.R."/>
            <person name="Covacci A."/>
            <person name="Mitchell T.J."/>
            <person name="Bentley S.D."/>
            <person name="Kilian M."/>
            <person name="Ehrlich G.D."/>
            <person name="Rappuoli R."/>
            <person name="Moxon E.R."/>
            <person name="Masignani V."/>
        </authorList>
    </citation>
    <scope>NUCLEOTIDE SEQUENCE [LARGE SCALE GENOMIC DNA]</scope>
    <source>
        <strain>Hungary19A-6</strain>
    </source>
</reference>
<accession>B1I6X7</accession>
<feature type="chain" id="PRO_1000092992" description="Peptidyl-tRNA hydrolase">
    <location>
        <begin position="1"/>
        <end position="189"/>
    </location>
</feature>
<feature type="active site" description="Proton acceptor" evidence="1">
    <location>
        <position position="20"/>
    </location>
</feature>
<feature type="binding site" evidence="1">
    <location>
        <position position="15"/>
    </location>
    <ligand>
        <name>tRNA</name>
        <dbReference type="ChEBI" id="CHEBI:17843"/>
    </ligand>
</feature>
<feature type="binding site" evidence="1">
    <location>
        <position position="66"/>
    </location>
    <ligand>
        <name>tRNA</name>
        <dbReference type="ChEBI" id="CHEBI:17843"/>
    </ligand>
</feature>
<feature type="binding site" evidence="1">
    <location>
        <position position="68"/>
    </location>
    <ligand>
        <name>tRNA</name>
        <dbReference type="ChEBI" id="CHEBI:17843"/>
    </ligand>
</feature>
<feature type="binding site" evidence="1">
    <location>
        <position position="114"/>
    </location>
    <ligand>
        <name>tRNA</name>
        <dbReference type="ChEBI" id="CHEBI:17843"/>
    </ligand>
</feature>
<feature type="site" description="Discriminates between blocked and unblocked aminoacyl-tRNA" evidence="1">
    <location>
        <position position="10"/>
    </location>
</feature>
<feature type="site" description="Stabilizes the basic form of H active site to accept a proton" evidence="1">
    <location>
        <position position="93"/>
    </location>
</feature>
<organism>
    <name type="scientific">Streptococcus pneumoniae (strain Hungary19A-6)</name>
    <dbReference type="NCBI Taxonomy" id="487214"/>
    <lineage>
        <taxon>Bacteria</taxon>
        <taxon>Bacillati</taxon>
        <taxon>Bacillota</taxon>
        <taxon>Bacilli</taxon>
        <taxon>Lactobacillales</taxon>
        <taxon>Streptococcaceae</taxon>
        <taxon>Streptococcus</taxon>
    </lineage>
</organism>
<sequence>MTKLLVGLGNPGDKYFETKHNVGFMLIDQLAKKQNVTFTHDKIFQADLASFFLNGEKIYLVKPTTFMNESGKAVHALLTYYGLDIDDLLIIYDDLDMEVGKIRLRAKGSAGGHNGIKSIIQHIGTQVFNRVKIGIGRPKNGMSVVHHVLSKFDRDDYIGILQSVDKVDDSVNYYLQEKNFEKTMQRYNG</sequence>
<gene>
    <name evidence="1" type="primary">pth</name>
    <name type="ordered locus">SPH_0005</name>
</gene>
<name>PTH_STRPI</name>
<keyword id="KW-0963">Cytoplasm</keyword>
<keyword id="KW-0378">Hydrolase</keyword>
<keyword id="KW-0694">RNA-binding</keyword>
<keyword id="KW-0820">tRNA-binding</keyword>
<evidence type="ECO:0000255" key="1">
    <source>
        <dbReference type="HAMAP-Rule" id="MF_00083"/>
    </source>
</evidence>
<dbReference type="EC" id="3.1.1.29" evidence="1"/>
<dbReference type="EMBL" id="CP000936">
    <property type="protein sequence ID" value="ACA36759.1"/>
    <property type="molecule type" value="Genomic_DNA"/>
</dbReference>
<dbReference type="RefSeq" id="WP_000163932.1">
    <property type="nucleotide sequence ID" value="NC_010380.1"/>
</dbReference>
<dbReference type="SMR" id="B1I6X7"/>
<dbReference type="GeneID" id="45652531"/>
<dbReference type="KEGG" id="spv:SPH_0005"/>
<dbReference type="HOGENOM" id="CLU_062456_4_1_9"/>
<dbReference type="Proteomes" id="UP000002163">
    <property type="component" value="Chromosome"/>
</dbReference>
<dbReference type="GO" id="GO:0005737">
    <property type="term" value="C:cytoplasm"/>
    <property type="evidence" value="ECO:0007669"/>
    <property type="project" value="UniProtKB-SubCell"/>
</dbReference>
<dbReference type="GO" id="GO:0004045">
    <property type="term" value="F:peptidyl-tRNA hydrolase activity"/>
    <property type="evidence" value="ECO:0007669"/>
    <property type="project" value="UniProtKB-UniRule"/>
</dbReference>
<dbReference type="GO" id="GO:0000049">
    <property type="term" value="F:tRNA binding"/>
    <property type="evidence" value="ECO:0007669"/>
    <property type="project" value="UniProtKB-UniRule"/>
</dbReference>
<dbReference type="GO" id="GO:0006515">
    <property type="term" value="P:protein quality control for misfolded or incompletely synthesized proteins"/>
    <property type="evidence" value="ECO:0007669"/>
    <property type="project" value="UniProtKB-UniRule"/>
</dbReference>
<dbReference type="GO" id="GO:0072344">
    <property type="term" value="P:rescue of stalled ribosome"/>
    <property type="evidence" value="ECO:0007669"/>
    <property type="project" value="UniProtKB-UniRule"/>
</dbReference>
<dbReference type="CDD" id="cd00462">
    <property type="entry name" value="PTH"/>
    <property type="match status" value="1"/>
</dbReference>
<dbReference type="FunFam" id="3.40.50.1470:FF:000001">
    <property type="entry name" value="Peptidyl-tRNA hydrolase"/>
    <property type="match status" value="1"/>
</dbReference>
<dbReference type="Gene3D" id="3.40.50.1470">
    <property type="entry name" value="Peptidyl-tRNA hydrolase"/>
    <property type="match status" value="1"/>
</dbReference>
<dbReference type="HAMAP" id="MF_00083">
    <property type="entry name" value="Pept_tRNA_hydro_bact"/>
    <property type="match status" value="1"/>
</dbReference>
<dbReference type="InterPro" id="IPR001328">
    <property type="entry name" value="Pept_tRNA_hydro"/>
</dbReference>
<dbReference type="InterPro" id="IPR018171">
    <property type="entry name" value="Pept_tRNA_hydro_CS"/>
</dbReference>
<dbReference type="InterPro" id="IPR036416">
    <property type="entry name" value="Pept_tRNA_hydro_sf"/>
</dbReference>
<dbReference type="NCBIfam" id="TIGR00447">
    <property type="entry name" value="pth"/>
    <property type="match status" value="1"/>
</dbReference>
<dbReference type="PANTHER" id="PTHR17224">
    <property type="entry name" value="PEPTIDYL-TRNA HYDROLASE"/>
    <property type="match status" value="1"/>
</dbReference>
<dbReference type="PANTHER" id="PTHR17224:SF1">
    <property type="entry name" value="PEPTIDYL-TRNA HYDROLASE"/>
    <property type="match status" value="1"/>
</dbReference>
<dbReference type="Pfam" id="PF01195">
    <property type="entry name" value="Pept_tRNA_hydro"/>
    <property type="match status" value="1"/>
</dbReference>
<dbReference type="SUPFAM" id="SSF53178">
    <property type="entry name" value="Peptidyl-tRNA hydrolase-like"/>
    <property type="match status" value="1"/>
</dbReference>
<dbReference type="PROSITE" id="PS01195">
    <property type="entry name" value="PEPT_TRNA_HYDROL_1"/>
    <property type="match status" value="1"/>
</dbReference>
<dbReference type="PROSITE" id="PS01196">
    <property type="entry name" value="PEPT_TRNA_HYDROL_2"/>
    <property type="match status" value="1"/>
</dbReference>
<proteinExistence type="inferred from homology"/>
<comment type="function">
    <text evidence="1">Hydrolyzes ribosome-free peptidyl-tRNAs (with 1 or more amino acids incorporated), which drop off the ribosome during protein synthesis, or as a result of ribosome stalling.</text>
</comment>
<comment type="function">
    <text evidence="1">Catalyzes the release of premature peptidyl moieties from peptidyl-tRNA molecules trapped in stalled 50S ribosomal subunits, and thus maintains levels of free tRNAs and 50S ribosomes.</text>
</comment>
<comment type="catalytic activity">
    <reaction evidence="1">
        <text>an N-acyl-L-alpha-aminoacyl-tRNA + H2O = an N-acyl-L-amino acid + a tRNA + H(+)</text>
        <dbReference type="Rhea" id="RHEA:54448"/>
        <dbReference type="Rhea" id="RHEA-COMP:10123"/>
        <dbReference type="Rhea" id="RHEA-COMP:13883"/>
        <dbReference type="ChEBI" id="CHEBI:15377"/>
        <dbReference type="ChEBI" id="CHEBI:15378"/>
        <dbReference type="ChEBI" id="CHEBI:59874"/>
        <dbReference type="ChEBI" id="CHEBI:78442"/>
        <dbReference type="ChEBI" id="CHEBI:138191"/>
        <dbReference type="EC" id="3.1.1.29"/>
    </reaction>
</comment>
<comment type="subunit">
    <text evidence="1">Monomer.</text>
</comment>
<comment type="subcellular location">
    <subcellularLocation>
        <location evidence="1">Cytoplasm</location>
    </subcellularLocation>
</comment>
<comment type="similarity">
    <text evidence="1">Belongs to the PTH family.</text>
</comment>
<protein>
    <recommendedName>
        <fullName evidence="1">Peptidyl-tRNA hydrolase</fullName>
        <shortName evidence="1">Pth</shortName>
        <ecNumber evidence="1">3.1.1.29</ecNumber>
    </recommendedName>
</protein>